<gene>
    <name type="primary">FOXO6</name>
</gene>
<dbReference type="EMBL" id="AC093151">
    <property type="status" value="NOT_ANNOTATED_CDS"/>
    <property type="molecule type" value="Genomic_DNA"/>
</dbReference>
<dbReference type="SMR" id="A8MYZ6"/>
<dbReference type="FunCoup" id="A8MYZ6">
    <property type="interactions" value="769"/>
</dbReference>
<dbReference type="IntAct" id="A8MYZ6">
    <property type="interactions" value="15"/>
</dbReference>
<dbReference type="MINT" id="A8MYZ6"/>
<dbReference type="STRING" id="9606.ENSP00000493184"/>
<dbReference type="GlyGen" id="A8MYZ6">
    <property type="glycosylation" value="1 site, 1 O-linked glycan (1 site)"/>
</dbReference>
<dbReference type="iPTMnet" id="A8MYZ6"/>
<dbReference type="PhosphoSitePlus" id="A8MYZ6"/>
<dbReference type="BioMuta" id="FOXO6"/>
<dbReference type="jPOST" id="A8MYZ6"/>
<dbReference type="MassIVE" id="A8MYZ6"/>
<dbReference type="PaxDb" id="9606-ENSP00000361672"/>
<dbReference type="PeptideAtlas" id="A8MYZ6"/>
<dbReference type="ProteomicsDB" id="2440"/>
<dbReference type="Antibodypedia" id="46860">
    <property type="antibodies" value="52 antibodies from 18 providers"/>
</dbReference>
<dbReference type="Ensembl" id="ENST00000641094.2">
    <property type="protein sequence ID" value="ENSP00000493184.1"/>
    <property type="gene ID" value="ENSG00000204060.8"/>
</dbReference>
<dbReference type="UCSC" id="uc057fie.1">
    <property type="organism name" value="human"/>
</dbReference>
<dbReference type="AGR" id="HGNC:24814"/>
<dbReference type="GeneCards" id="FOXO6"/>
<dbReference type="HGNC" id="HGNC:24814">
    <property type="gene designation" value="FOXO6"/>
</dbReference>
<dbReference type="HPA" id="ENSG00000204060">
    <property type="expression patterns" value="Not detected"/>
</dbReference>
<dbReference type="MIM" id="611457">
    <property type="type" value="gene"/>
</dbReference>
<dbReference type="neXtProt" id="NX_A8MYZ6"/>
<dbReference type="OpenTargets" id="ENSG00000204060"/>
<dbReference type="PharmGKB" id="PA162388893"/>
<dbReference type="VEuPathDB" id="HostDB:ENSG00000204060"/>
<dbReference type="eggNOG" id="KOG2294">
    <property type="taxonomic scope" value="Eukaryota"/>
</dbReference>
<dbReference type="GeneTree" id="ENSGT00940000161401"/>
<dbReference type="HOGENOM" id="CLU_023456_2_0_1"/>
<dbReference type="InParanoid" id="A8MYZ6"/>
<dbReference type="OMA" id="PIMANHE"/>
<dbReference type="OrthoDB" id="5954824at2759"/>
<dbReference type="PAN-GO" id="A8MYZ6">
    <property type="GO annotations" value="4 GO annotations based on evolutionary models"/>
</dbReference>
<dbReference type="PhylomeDB" id="A8MYZ6"/>
<dbReference type="PathwayCommons" id="A8MYZ6"/>
<dbReference type="Reactome" id="R-HSA-198693">
    <property type="pathway name" value="AKT phosphorylates targets in the nucleus"/>
</dbReference>
<dbReference type="Reactome" id="R-HSA-5674400">
    <property type="pathway name" value="Constitutive Signaling by AKT1 E17K in Cancer"/>
</dbReference>
<dbReference type="Reactome" id="R-HSA-9614399">
    <property type="pathway name" value="Regulation of localization of FOXO transcription factors"/>
</dbReference>
<dbReference type="Reactome" id="R-HSA-9615017">
    <property type="pathway name" value="FOXO-mediated transcription of oxidative stress, metabolic and neuronal genes"/>
</dbReference>
<dbReference type="SignaLink" id="A8MYZ6"/>
<dbReference type="SIGNOR" id="A8MYZ6"/>
<dbReference type="ChiTaRS" id="FOXO6">
    <property type="organism name" value="human"/>
</dbReference>
<dbReference type="Pharos" id="A8MYZ6">
    <property type="development level" value="Tbio"/>
</dbReference>
<dbReference type="PRO" id="PR:A8MYZ6"/>
<dbReference type="Proteomes" id="UP000005640">
    <property type="component" value="Chromosome 1"/>
</dbReference>
<dbReference type="RNAct" id="A8MYZ6">
    <property type="molecule type" value="protein"/>
</dbReference>
<dbReference type="Bgee" id="ENSG00000204060">
    <property type="expression patterns" value="Expressed in cortical plate and 91 other cell types or tissues"/>
</dbReference>
<dbReference type="GO" id="GO:0000785">
    <property type="term" value="C:chromatin"/>
    <property type="evidence" value="ECO:0000247"/>
    <property type="project" value="NTNU_SB"/>
</dbReference>
<dbReference type="GO" id="GO:0005737">
    <property type="term" value="C:cytoplasm"/>
    <property type="evidence" value="ECO:0000250"/>
    <property type="project" value="ParkinsonsUK-UCL"/>
</dbReference>
<dbReference type="GO" id="GO:0005654">
    <property type="term" value="C:nucleoplasm"/>
    <property type="evidence" value="ECO:0007669"/>
    <property type="project" value="UniProtKB-ARBA"/>
</dbReference>
<dbReference type="GO" id="GO:0005634">
    <property type="term" value="C:nucleus"/>
    <property type="evidence" value="ECO:0000250"/>
    <property type="project" value="ParkinsonsUK-UCL"/>
</dbReference>
<dbReference type="GO" id="GO:0000981">
    <property type="term" value="F:DNA-binding transcription factor activity, RNA polymerase II-specific"/>
    <property type="evidence" value="ECO:0000250"/>
    <property type="project" value="ParkinsonsUK-UCL"/>
</dbReference>
<dbReference type="GO" id="GO:0000978">
    <property type="term" value="F:RNA polymerase II cis-regulatory region sequence-specific DNA binding"/>
    <property type="evidence" value="ECO:0000318"/>
    <property type="project" value="GO_Central"/>
</dbReference>
<dbReference type="GO" id="GO:0007613">
    <property type="term" value="P:memory"/>
    <property type="evidence" value="ECO:0007669"/>
    <property type="project" value="Ensembl"/>
</dbReference>
<dbReference type="GO" id="GO:0060999">
    <property type="term" value="P:positive regulation of dendritic spine development"/>
    <property type="evidence" value="ECO:0000250"/>
    <property type="project" value="ParkinsonsUK-UCL"/>
</dbReference>
<dbReference type="GO" id="GO:0006357">
    <property type="term" value="P:regulation of transcription by RNA polymerase II"/>
    <property type="evidence" value="ECO:0000250"/>
    <property type="project" value="ParkinsonsUK-UCL"/>
</dbReference>
<dbReference type="CDD" id="cd20063">
    <property type="entry name" value="FH_FOXO6"/>
    <property type="match status" value="1"/>
</dbReference>
<dbReference type="FunFam" id="1.10.10.10:FF:000032">
    <property type="entry name" value="Forkhead box protein O4"/>
    <property type="match status" value="1"/>
</dbReference>
<dbReference type="Gene3D" id="6.10.250.1690">
    <property type="match status" value="1"/>
</dbReference>
<dbReference type="Gene3D" id="1.10.10.10">
    <property type="entry name" value="Winged helix-like DNA-binding domain superfamily/Winged helix DNA-binding domain"/>
    <property type="match status" value="1"/>
</dbReference>
<dbReference type="InterPro" id="IPR047410">
    <property type="entry name" value="FH_FOXO6"/>
</dbReference>
<dbReference type="InterPro" id="IPR001766">
    <property type="entry name" value="Fork_head_dom"/>
</dbReference>
<dbReference type="InterPro" id="IPR032067">
    <property type="entry name" value="FOXO-TAD"/>
</dbReference>
<dbReference type="InterPro" id="IPR030456">
    <property type="entry name" value="TF_fork_head_CS_2"/>
</dbReference>
<dbReference type="InterPro" id="IPR036388">
    <property type="entry name" value="WH-like_DNA-bd_sf"/>
</dbReference>
<dbReference type="InterPro" id="IPR036390">
    <property type="entry name" value="WH_DNA-bd_sf"/>
</dbReference>
<dbReference type="PANTHER" id="PTHR45767">
    <property type="entry name" value="FORKHEAD BOX PROTEIN O"/>
    <property type="match status" value="1"/>
</dbReference>
<dbReference type="PANTHER" id="PTHR45767:SF5">
    <property type="entry name" value="FORKHEAD BOX PROTEIN O6"/>
    <property type="match status" value="1"/>
</dbReference>
<dbReference type="Pfam" id="PF00250">
    <property type="entry name" value="Forkhead"/>
    <property type="match status" value="1"/>
</dbReference>
<dbReference type="Pfam" id="PF16676">
    <property type="entry name" value="FOXO-TAD"/>
    <property type="match status" value="1"/>
</dbReference>
<dbReference type="PRINTS" id="PR00053">
    <property type="entry name" value="FORKHEAD"/>
</dbReference>
<dbReference type="SMART" id="SM00339">
    <property type="entry name" value="FH"/>
    <property type="match status" value="1"/>
</dbReference>
<dbReference type="SUPFAM" id="SSF46785">
    <property type="entry name" value="Winged helix' DNA-binding domain"/>
    <property type="match status" value="1"/>
</dbReference>
<dbReference type="PROSITE" id="PS00658">
    <property type="entry name" value="FORK_HEAD_2"/>
    <property type="match status" value="1"/>
</dbReference>
<dbReference type="PROSITE" id="PS50039">
    <property type="entry name" value="FORK_HEAD_3"/>
    <property type="match status" value="1"/>
</dbReference>
<evidence type="ECO:0000250" key="1"/>
<evidence type="ECO:0000250" key="2">
    <source>
        <dbReference type="UniProtKB" id="Q70KY4"/>
    </source>
</evidence>
<evidence type="ECO:0000255" key="3">
    <source>
        <dbReference type="PROSITE-ProRule" id="PRU00089"/>
    </source>
</evidence>
<evidence type="ECO:0000256" key="4">
    <source>
        <dbReference type="SAM" id="MobiDB-lite"/>
    </source>
</evidence>
<name>FOXO6_HUMAN</name>
<protein>
    <recommendedName>
        <fullName>Forkhead box protein O6</fullName>
    </recommendedName>
</protein>
<feature type="chain" id="PRO_0000317413" description="Forkhead box protein O6">
    <location>
        <begin position="1"/>
        <end position="492"/>
    </location>
</feature>
<feature type="DNA-binding region" description="Fork-head" evidence="3">
    <location>
        <begin position="88"/>
        <end position="182"/>
    </location>
</feature>
<feature type="region of interest" description="Disordered" evidence="4">
    <location>
        <begin position="1"/>
        <end position="76"/>
    </location>
</feature>
<feature type="region of interest" description="Disordered" evidence="4">
    <location>
        <begin position="163"/>
        <end position="235"/>
    </location>
</feature>
<feature type="region of interest" description="Disordered" evidence="4">
    <location>
        <begin position="315"/>
        <end position="338"/>
    </location>
</feature>
<feature type="region of interest" description="Disordered" evidence="4">
    <location>
        <begin position="466"/>
        <end position="492"/>
    </location>
</feature>
<feature type="compositionally biased region" description="Basic residues" evidence="4">
    <location>
        <begin position="192"/>
        <end position="203"/>
    </location>
</feature>
<feature type="compositionally biased region" description="Low complexity" evidence="4">
    <location>
        <begin position="225"/>
        <end position="235"/>
    </location>
</feature>
<feature type="compositionally biased region" description="Pro residues" evidence="4">
    <location>
        <begin position="472"/>
        <end position="486"/>
    </location>
</feature>
<feature type="modified residue" description="Phosphoserine" evidence="2">
    <location>
        <position position="184"/>
    </location>
</feature>
<keyword id="KW-0010">Activator</keyword>
<keyword id="KW-0963">Cytoplasm</keyword>
<keyword id="KW-0238">DNA-binding</keyword>
<keyword id="KW-0539">Nucleus</keyword>
<keyword id="KW-0597">Phosphoprotein</keyword>
<keyword id="KW-1267">Proteomics identification</keyword>
<keyword id="KW-1185">Reference proteome</keyword>
<keyword id="KW-0804">Transcription</keyword>
<keyword id="KW-0805">Transcription regulation</keyword>
<proteinExistence type="evidence at protein level"/>
<sequence>MAAKLRAHQVDVDPDFAPQSRPRSCTWPLPQPDLAGDEDGALGAGVAEGAEDCGPERRATAPAMAPAPPLGAEVGPLRKAKSSRRNAWGNLSYADLITKAIESAPDKRLTLSQIYDWMVRYVPYFKDKGDSNSSAGWKNSIRHNLSLHTRFIRVQNEGTGKSSWWMLNPEGGKTGKTPRRRAVSMDNGAKFLRIKGKASKKKQLQAPERSPDDSSPSAPAPGPVPAAAKWAASPASHASDDYEAWADFRGGGRPLLGEAAELEDDEALEALAPSSPLMYPSPASALSPALGSRCPGELPRLAELGGPLGLHGGGGAGLPEGLLDGAQDAYGPRPAPRPGPVLGAPGELALAGAAAAYPGKGAAPYAPPAPSRSALAHPISLMTLPGEAGAAGLAPPGHAAAFGGPPGGLLLDALPGPYAAAAAGPLGAAPDRFPADLDLDMFSGSLECDVESIILNDFMDSDEMDFNFDSALPPPPPGLAGAPPPNQSWVPG</sequence>
<accession>A8MYZ6</accession>
<organism>
    <name type="scientific">Homo sapiens</name>
    <name type="common">Human</name>
    <dbReference type="NCBI Taxonomy" id="9606"/>
    <lineage>
        <taxon>Eukaryota</taxon>
        <taxon>Metazoa</taxon>
        <taxon>Chordata</taxon>
        <taxon>Craniata</taxon>
        <taxon>Vertebrata</taxon>
        <taxon>Euteleostomi</taxon>
        <taxon>Mammalia</taxon>
        <taxon>Eutheria</taxon>
        <taxon>Euarchontoglires</taxon>
        <taxon>Primates</taxon>
        <taxon>Haplorrhini</taxon>
        <taxon>Catarrhini</taxon>
        <taxon>Hominidae</taxon>
        <taxon>Homo</taxon>
    </lineage>
</organism>
<reference key="1">
    <citation type="journal article" date="2006" name="Nature">
        <title>The DNA sequence and biological annotation of human chromosome 1.</title>
        <authorList>
            <person name="Gregory S.G."/>
            <person name="Barlow K.F."/>
            <person name="McLay K.E."/>
            <person name="Kaul R."/>
            <person name="Swarbreck D."/>
            <person name="Dunham A."/>
            <person name="Scott C.E."/>
            <person name="Howe K.L."/>
            <person name="Woodfine K."/>
            <person name="Spencer C.C.A."/>
            <person name="Jones M.C."/>
            <person name="Gillson C."/>
            <person name="Searle S."/>
            <person name="Zhou Y."/>
            <person name="Kokocinski F."/>
            <person name="McDonald L."/>
            <person name="Evans R."/>
            <person name="Phillips K."/>
            <person name="Atkinson A."/>
            <person name="Cooper R."/>
            <person name="Jones C."/>
            <person name="Hall R.E."/>
            <person name="Andrews T.D."/>
            <person name="Lloyd C."/>
            <person name="Ainscough R."/>
            <person name="Almeida J.P."/>
            <person name="Ambrose K.D."/>
            <person name="Anderson F."/>
            <person name="Andrew R.W."/>
            <person name="Ashwell R.I.S."/>
            <person name="Aubin K."/>
            <person name="Babbage A.K."/>
            <person name="Bagguley C.L."/>
            <person name="Bailey J."/>
            <person name="Beasley H."/>
            <person name="Bethel G."/>
            <person name="Bird C.P."/>
            <person name="Bray-Allen S."/>
            <person name="Brown J.Y."/>
            <person name="Brown A.J."/>
            <person name="Buckley D."/>
            <person name="Burton J."/>
            <person name="Bye J."/>
            <person name="Carder C."/>
            <person name="Chapman J.C."/>
            <person name="Clark S.Y."/>
            <person name="Clarke G."/>
            <person name="Clee C."/>
            <person name="Cobley V."/>
            <person name="Collier R.E."/>
            <person name="Corby N."/>
            <person name="Coville G.J."/>
            <person name="Davies J."/>
            <person name="Deadman R."/>
            <person name="Dunn M."/>
            <person name="Earthrowl M."/>
            <person name="Ellington A.G."/>
            <person name="Errington H."/>
            <person name="Frankish A."/>
            <person name="Frankland J."/>
            <person name="French L."/>
            <person name="Garner P."/>
            <person name="Garnett J."/>
            <person name="Gay L."/>
            <person name="Ghori M.R.J."/>
            <person name="Gibson R."/>
            <person name="Gilby L.M."/>
            <person name="Gillett W."/>
            <person name="Glithero R.J."/>
            <person name="Grafham D.V."/>
            <person name="Griffiths C."/>
            <person name="Griffiths-Jones S."/>
            <person name="Grocock R."/>
            <person name="Hammond S."/>
            <person name="Harrison E.S.I."/>
            <person name="Hart E."/>
            <person name="Haugen E."/>
            <person name="Heath P.D."/>
            <person name="Holmes S."/>
            <person name="Holt K."/>
            <person name="Howden P.J."/>
            <person name="Hunt A.R."/>
            <person name="Hunt S.E."/>
            <person name="Hunter G."/>
            <person name="Isherwood J."/>
            <person name="James R."/>
            <person name="Johnson C."/>
            <person name="Johnson D."/>
            <person name="Joy A."/>
            <person name="Kay M."/>
            <person name="Kershaw J.K."/>
            <person name="Kibukawa M."/>
            <person name="Kimberley A.M."/>
            <person name="King A."/>
            <person name="Knights A.J."/>
            <person name="Lad H."/>
            <person name="Laird G."/>
            <person name="Lawlor S."/>
            <person name="Leongamornlert D.A."/>
            <person name="Lloyd D.M."/>
            <person name="Loveland J."/>
            <person name="Lovell J."/>
            <person name="Lush M.J."/>
            <person name="Lyne R."/>
            <person name="Martin S."/>
            <person name="Mashreghi-Mohammadi M."/>
            <person name="Matthews L."/>
            <person name="Matthews N.S.W."/>
            <person name="McLaren S."/>
            <person name="Milne S."/>
            <person name="Mistry S."/>
            <person name="Moore M.J.F."/>
            <person name="Nickerson T."/>
            <person name="O'Dell C.N."/>
            <person name="Oliver K."/>
            <person name="Palmeiri A."/>
            <person name="Palmer S.A."/>
            <person name="Parker A."/>
            <person name="Patel D."/>
            <person name="Pearce A.V."/>
            <person name="Peck A.I."/>
            <person name="Pelan S."/>
            <person name="Phelps K."/>
            <person name="Phillimore B.J."/>
            <person name="Plumb R."/>
            <person name="Rajan J."/>
            <person name="Raymond C."/>
            <person name="Rouse G."/>
            <person name="Saenphimmachak C."/>
            <person name="Sehra H.K."/>
            <person name="Sheridan E."/>
            <person name="Shownkeen R."/>
            <person name="Sims S."/>
            <person name="Skuce C.D."/>
            <person name="Smith M."/>
            <person name="Steward C."/>
            <person name="Subramanian S."/>
            <person name="Sycamore N."/>
            <person name="Tracey A."/>
            <person name="Tromans A."/>
            <person name="Van Helmond Z."/>
            <person name="Wall M."/>
            <person name="Wallis J.M."/>
            <person name="White S."/>
            <person name="Whitehead S.L."/>
            <person name="Wilkinson J.E."/>
            <person name="Willey D.L."/>
            <person name="Williams H."/>
            <person name="Wilming L."/>
            <person name="Wray P.W."/>
            <person name="Wu Z."/>
            <person name="Coulson A."/>
            <person name="Vaudin M."/>
            <person name="Sulston J.E."/>
            <person name="Durbin R.M."/>
            <person name="Hubbard T."/>
            <person name="Wooster R."/>
            <person name="Dunham I."/>
            <person name="Carter N.P."/>
            <person name="McVean G."/>
            <person name="Ross M.T."/>
            <person name="Harrow J."/>
            <person name="Olson M.V."/>
            <person name="Beck S."/>
            <person name="Rogers J."/>
            <person name="Bentley D.R."/>
        </authorList>
    </citation>
    <scope>NUCLEOTIDE SEQUENCE [LARGE SCALE GENOMIC DNA]</scope>
</reference>
<comment type="function">
    <text evidence="1">Transcriptional activator.</text>
</comment>
<comment type="interaction">
    <interactant intactId="EBI-8531039">
        <id>A8MYZ6</id>
    </interactant>
    <interactant intactId="EBI-1049011">
        <id>P41235</id>
        <label>HNF4A</label>
    </interactant>
    <organismsDiffer>false</organismsDiffer>
    <experiments>2</experiments>
</comment>
<comment type="subcellular location">
    <subcellularLocation>
        <location evidence="1">Cytoplasm</location>
    </subcellularLocation>
    <subcellularLocation>
        <location evidence="3">Nucleus</location>
    </subcellularLocation>
    <text evidence="1">When phosphorylated, translocated from nucleus to cytoplasm. High nuclear localization after stimulation with growth factors (By similarity).</text>
</comment>
<comment type="PTM">
    <text evidence="1">Phosphorylation of Ser-184 is be important in regulating the transacriptional activity.</text>
</comment>